<evidence type="ECO:0000255" key="1">
    <source>
        <dbReference type="HAMAP-Rule" id="MF_00399"/>
    </source>
</evidence>
<name>DSBD_CAMJR</name>
<organism>
    <name type="scientific">Campylobacter jejuni (strain RM1221)</name>
    <dbReference type="NCBI Taxonomy" id="195099"/>
    <lineage>
        <taxon>Bacteria</taxon>
        <taxon>Pseudomonadati</taxon>
        <taxon>Campylobacterota</taxon>
        <taxon>Epsilonproteobacteria</taxon>
        <taxon>Campylobacterales</taxon>
        <taxon>Campylobacteraceae</taxon>
        <taxon>Campylobacter</taxon>
    </lineage>
</organism>
<protein>
    <recommendedName>
        <fullName evidence="1">Thiol:disulfide interchange protein DsbD</fullName>
        <ecNumber evidence="1">1.8.1.8</ecNumber>
    </recommendedName>
    <alternativeName>
        <fullName evidence="1">Protein-disulfide reductase</fullName>
        <shortName evidence="1">Disulfide reductase</shortName>
    </alternativeName>
</protein>
<accession>Q5HVG7</accession>
<keyword id="KW-0997">Cell inner membrane</keyword>
<keyword id="KW-1003">Cell membrane</keyword>
<keyword id="KW-0201">Cytochrome c-type biogenesis</keyword>
<keyword id="KW-1015">Disulfide bond</keyword>
<keyword id="KW-0249">Electron transport</keyword>
<keyword id="KW-0472">Membrane</keyword>
<keyword id="KW-0520">NAD</keyword>
<keyword id="KW-0560">Oxidoreductase</keyword>
<keyword id="KW-0676">Redox-active center</keyword>
<keyword id="KW-0732">Signal</keyword>
<keyword id="KW-0812">Transmembrane</keyword>
<keyword id="KW-1133">Transmembrane helix</keyword>
<keyword id="KW-0813">Transport</keyword>
<comment type="function">
    <text evidence="1">Required to facilitate the formation of correct disulfide bonds in some periplasmic proteins and for the assembly of the periplasmic c-type cytochromes. Acts by transferring electrons from cytoplasmic thioredoxin to the periplasm. This transfer involves a cascade of disulfide bond formation and reduction steps.</text>
</comment>
<comment type="catalytic activity">
    <reaction evidence="1">
        <text>[protein]-dithiol + NAD(+) = [protein]-disulfide + NADH + H(+)</text>
        <dbReference type="Rhea" id="RHEA:18749"/>
        <dbReference type="Rhea" id="RHEA-COMP:10593"/>
        <dbReference type="Rhea" id="RHEA-COMP:10594"/>
        <dbReference type="ChEBI" id="CHEBI:15378"/>
        <dbReference type="ChEBI" id="CHEBI:29950"/>
        <dbReference type="ChEBI" id="CHEBI:50058"/>
        <dbReference type="ChEBI" id="CHEBI:57540"/>
        <dbReference type="ChEBI" id="CHEBI:57945"/>
        <dbReference type="EC" id="1.8.1.8"/>
    </reaction>
</comment>
<comment type="catalytic activity">
    <reaction evidence="1">
        <text>[protein]-dithiol + NADP(+) = [protein]-disulfide + NADPH + H(+)</text>
        <dbReference type="Rhea" id="RHEA:18753"/>
        <dbReference type="Rhea" id="RHEA-COMP:10593"/>
        <dbReference type="Rhea" id="RHEA-COMP:10594"/>
        <dbReference type="ChEBI" id="CHEBI:15378"/>
        <dbReference type="ChEBI" id="CHEBI:29950"/>
        <dbReference type="ChEBI" id="CHEBI:50058"/>
        <dbReference type="ChEBI" id="CHEBI:57783"/>
        <dbReference type="ChEBI" id="CHEBI:58349"/>
        <dbReference type="EC" id="1.8.1.8"/>
    </reaction>
</comment>
<comment type="subcellular location">
    <subcellularLocation>
        <location evidence="1">Cell inner membrane</location>
        <topology evidence="1">Multi-pass membrane protein</topology>
    </subcellularLocation>
</comment>
<comment type="similarity">
    <text evidence="1">Belongs to the thioredoxin family. DsbD subfamily.</text>
</comment>
<sequence>MRIFGIILLSFCLCFASILSLNEAFNVKSNSYNNSISIDIELGKDIYLYSNKLKLYINEKDISSLINLPQSSTRGNENVYYQKLNLALPNLLLERFAKNTTNLIKLEFQGCSEQGLCYNPQTWYFDLISKKDAFEISKPYKAQKTDKKTKIESEESSIANFLATDNFFWILLSFFGYGLLLSLTPCILPMIPILSSLIVAKSNAKFSKKYSFFLSFIYVFFMSLAYAIAGVIASFLGASIQGILQKPIILILFALIFIAFAFAMFGAFRFELPLRFQTFIHKKSEKGKGVVGIAIMGFLSALIVGPCVAAPLAGALIYIANTGNALLGGSALFIMSFGMGIPLLFIGLGLGFIKPGFWMEKVKIFFGFVMLAMAIWILSRIIEENYILIAYGILGVFFSVFMGIFEKSFTIISKIKKSILILILAYSLSIFLGGLFGAKNFLNPLNFNTISASKHALSYDYINNFEQLKQEIQTNTKPIMLDFTASWCENCKLLDELTFSDERIIQKMQNYKLIKVDVSENNNEQIKTMKEFNVFGPPVLIFFENGKEKLKITGFISADDLLKKIEP</sequence>
<dbReference type="EC" id="1.8.1.8" evidence="1"/>
<dbReference type="EMBL" id="CP000025">
    <property type="protein sequence ID" value="AAW35784.1"/>
    <property type="molecule type" value="Genomic_DNA"/>
</dbReference>
<dbReference type="RefSeq" id="WP_002852245.1">
    <property type="nucleotide sequence ID" value="NC_003912.7"/>
</dbReference>
<dbReference type="SMR" id="Q5HVG7"/>
<dbReference type="KEGG" id="cjr:CJE0706"/>
<dbReference type="HOGENOM" id="CLU_014657_3_0_7"/>
<dbReference type="GO" id="GO:0005886">
    <property type="term" value="C:plasma membrane"/>
    <property type="evidence" value="ECO:0007669"/>
    <property type="project" value="UniProtKB-SubCell"/>
</dbReference>
<dbReference type="GO" id="GO:0009055">
    <property type="term" value="F:electron transfer activity"/>
    <property type="evidence" value="ECO:0007669"/>
    <property type="project" value="UniProtKB-UniRule"/>
</dbReference>
<dbReference type="GO" id="GO:0047134">
    <property type="term" value="F:protein-disulfide reductase [NAD(P)H] activity"/>
    <property type="evidence" value="ECO:0007669"/>
    <property type="project" value="UniProtKB-UniRule"/>
</dbReference>
<dbReference type="GO" id="GO:0045454">
    <property type="term" value="P:cell redox homeostasis"/>
    <property type="evidence" value="ECO:0007669"/>
    <property type="project" value="TreeGrafter"/>
</dbReference>
<dbReference type="GO" id="GO:0017004">
    <property type="term" value="P:cytochrome complex assembly"/>
    <property type="evidence" value="ECO:0007669"/>
    <property type="project" value="UniProtKB-UniRule"/>
</dbReference>
<dbReference type="CDD" id="cd02953">
    <property type="entry name" value="DsbDgamma"/>
    <property type="match status" value="1"/>
</dbReference>
<dbReference type="Gene3D" id="3.40.30.10">
    <property type="entry name" value="Glutaredoxin"/>
    <property type="match status" value="1"/>
</dbReference>
<dbReference type="Gene3D" id="2.60.40.1250">
    <property type="entry name" value="Thiol:disulfide interchange protein DsbD, N-terminal domain"/>
    <property type="match status" value="1"/>
</dbReference>
<dbReference type="HAMAP" id="MF_00399">
    <property type="entry name" value="DbsD"/>
    <property type="match status" value="1"/>
</dbReference>
<dbReference type="InterPro" id="IPR003834">
    <property type="entry name" value="Cyt_c_assmbl_TM_dom"/>
</dbReference>
<dbReference type="InterPro" id="IPR035671">
    <property type="entry name" value="DsbD_gamma"/>
</dbReference>
<dbReference type="InterPro" id="IPR028250">
    <property type="entry name" value="DsbDN"/>
</dbReference>
<dbReference type="InterPro" id="IPR036929">
    <property type="entry name" value="DsbDN_sf"/>
</dbReference>
<dbReference type="InterPro" id="IPR022910">
    <property type="entry name" value="Thiol_diS_interchange_DbsD"/>
</dbReference>
<dbReference type="InterPro" id="IPR036249">
    <property type="entry name" value="Thioredoxin-like_sf"/>
</dbReference>
<dbReference type="InterPro" id="IPR013766">
    <property type="entry name" value="Thioredoxin_domain"/>
</dbReference>
<dbReference type="NCBIfam" id="NF001419">
    <property type="entry name" value="PRK00293.1"/>
    <property type="match status" value="1"/>
</dbReference>
<dbReference type="PANTHER" id="PTHR32234">
    <property type="entry name" value="THIOL:DISULFIDE INTERCHANGE PROTEIN DSBD"/>
    <property type="match status" value="1"/>
</dbReference>
<dbReference type="PANTHER" id="PTHR32234:SF0">
    <property type="entry name" value="THIOL:DISULFIDE INTERCHANGE PROTEIN DSBD"/>
    <property type="match status" value="1"/>
</dbReference>
<dbReference type="Pfam" id="PF11412">
    <property type="entry name" value="DsbD_N"/>
    <property type="match status" value="1"/>
</dbReference>
<dbReference type="Pfam" id="PF02683">
    <property type="entry name" value="DsbD_TM"/>
    <property type="match status" value="1"/>
</dbReference>
<dbReference type="Pfam" id="PF00085">
    <property type="entry name" value="Thioredoxin"/>
    <property type="match status" value="1"/>
</dbReference>
<dbReference type="SUPFAM" id="SSF74863">
    <property type="entry name" value="Thiol:disulfide interchange protein DsbD, N-terminal domain (DsbD-alpha)"/>
    <property type="match status" value="1"/>
</dbReference>
<dbReference type="SUPFAM" id="SSF52833">
    <property type="entry name" value="Thioredoxin-like"/>
    <property type="match status" value="1"/>
</dbReference>
<dbReference type="PROSITE" id="PS51352">
    <property type="entry name" value="THIOREDOXIN_2"/>
    <property type="match status" value="1"/>
</dbReference>
<feature type="signal peptide" evidence="1">
    <location>
        <begin position="1"/>
        <end position="22"/>
    </location>
</feature>
<feature type="chain" id="PRO_0000304383" description="Thiol:disulfide interchange protein DsbD">
    <location>
        <begin position="23"/>
        <end position="567"/>
    </location>
</feature>
<feature type="transmembrane region" description="Helical" evidence="1">
    <location>
        <begin position="167"/>
        <end position="187"/>
    </location>
</feature>
<feature type="transmembrane region" description="Helical" evidence="1">
    <location>
        <begin position="212"/>
        <end position="232"/>
    </location>
</feature>
<feature type="transmembrane region" description="Helical" evidence="1">
    <location>
        <begin position="248"/>
        <end position="268"/>
    </location>
</feature>
<feature type="transmembrane region" description="Helical" evidence="1">
    <location>
        <begin position="290"/>
        <end position="310"/>
    </location>
</feature>
<feature type="transmembrane region" description="Helical" evidence="1">
    <location>
        <begin position="333"/>
        <end position="353"/>
    </location>
</feature>
<feature type="transmembrane region" description="Helical" evidence="1">
    <location>
        <begin position="362"/>
        <end position="382"/>
    </location>
</feature>
<feature type="transmembrane region" description="Helical" evidence="1">
    <location>
        <begin position="386"/>
        <end position="406"/>
    </location>
</feature>
<feature type="transmembrane region" description="Helical" evidence="1">
    <location>
        <begin position="418"/>
        <end position="438"/>
    </location>
</feature>
<feature type="domain" description="Thioredoxin" evidence="1">
    <location>
        <begin position="430"/>
        <end position="567"/>
    </location>
</feature>
<feature type="disulfide bond" description="Redox-active" evidence="1">
    <location>
        <begin position="111"/>
        <end position="117"/>
    </location>
</feature>
<feature type="disulfide bond" description="Redox-active" evidence="1">
    <location>
        <begin position="186"/>
        <end position="307"/>
    </location>
</feature>
<feature type="disulfide bond" description="Redox-active" evidence="1">
    <location>
        <begin position="488"/>
        <end position="491"/>
    </location>
</feature>
<reference key="1">
    <citation type="journal article" date="2005" name="PLoS Biol.">
        <title>Major structural differences and novel potential virulence mechanisms from the genomes of multiple Campylobacter species.</title>
        <authorList>
            <person name="Fouts D.E."/>
            <person name="Mongodin E.F."/>
            <person name="Mandrell R.E."/>
            <person name="Miller W.G."/>
            <person name="Rasko D.A."/>
            <person name="Ravel J."/>
            <person name="Brinkac L.M."/>
            <person name="DeBoy R.T."/>
            <person name="Parker C.T."/>
            <person name="Daugherty S.C."/>
            <person name="Dodson R.J."/>
            <person name="Durkin A.S."/>
            <person name="Madupu R."/>
            <person name="Sullivan S.A."/>
            <person name="Shetty J.U."/>
            <person name="Ayodeji M.A."/>
            <person name="Shvartsbeyn A."/>
            <person name="Schatz M.C."/>
            <person name="Badger J.H."/>
            <person name="Fraser C.M."/>
            <person name="Nelson K.E."/>
        </authorList>
    </citation>
    <scope>NUCLEOTIDE SEQUENCE [LARGE SCALE GENOMIC DNA]</scope>
    <source>
        <strain>RM1221</strain>
    </source>
</reference>
<gene>
    <name evidence="1" type="primary">dsbD</name>
    <name type="ordered locus">CJE0706</name>
</gene>
<proteinExistence type="inferred from homology"/>